<protein>
    <recommendedName>
        <fullName>Promotilin</fullName>
    </recommendedName>
    <component>
        <recommendedName>
            <fullName>Motilin</fullName>
        </recommendedName>
    </component>
    <component>
        <recommendedName>
            <fullName>Motilin-associated peptide</fullName>
            <shortName>MAP</shortName>
        </recommendedName>
    </component>
</protein>
<organism>
    <name type="scientific">Equus caballus</name>
    <name type="common">Horse</name>
    <dbReference type="NCBI Taxonomy" id="9796"/>
    <lineage>
        <taxon>Eukaryota</taxon>
        <taxon>Metazoa</taxon>
        <taxon>Chordata</taxon>
        <taxon>Craniata</taxon>
        <taxon>Vertebrata</taxon>
        <taxon>Euteleostomi</taxon>
        <taxon>Mammalia</taxon>
        <taxon>Eutheria</taxon>
        <taxon>Laurasiatheria</taxon>
        <taxon>Perissodactyla</taxon>
        <taxon>Equidae</taxon>
        <taxon>Equus</taxon>
    </lineage>
</organism>
<proteinExistence type="evidence at transcript level"/>
<name>MOTI_HORSE</name>
<sequence>FVPIFTYSELQRMQEKERNRGQKKSLGLQQRSEEVGSLDPTEAAEEEGKEVIKLTAPVEIGMRMNSRQLEKYRAALEGLLSEVLLSTQNAAK</sequence>
<reference key="1">
    <citation type="journal article" date="1999" name="Gene">
        <title>Sequence and characterization of cDNA encoding the motilin precursor from chicken, dog, cow and horse. Evidence of mosaic evolution in prepromotilin.</title>
        <authorList>
            <person name="Huang Z."/>
            <person name="Depoortere I."/>
            <person name="De Clercq P."/>
            <person name="Peeters T."/>
        </authorList>
    </citation>
    <scope>NUCLEOTIDE SEQUENCE [MRNA]</scope>
    <source>
        <tissue>Duodenal mucosa</tissue>
    </source>
</reference>
<keyword id="KW-0165">Cleavage on pair of basic residues</keyword>
<keyword id="KW-0372">Hormone</keyword>
<keyword id="KW-1185">Reference proteome</keyword>
<keyword id="KW-0964">Secreted</keyword>
<feature type="chain" id="PRO_0000342170" description="Promotilin">
    <location>
        <begin position="1"/>
        <end position="92"/>
    </location>
</feature>
<feature type="peptide" id="PRO_0000019182" description="Motilin">
    <location>
        <begin position="1"/>
        <end position="22"/>
    </location>
</feature>
<feature type="peptide" id="PRO_0000019183" description="Motilin-associated peptide">
    <location>
        <begin position="25"/>
        <end position="92"/>
    </location>
</feature>
<feature type="region of interest" description="Disordered" evidence="2">
    <location>
        <begin position="12"/>
        <end position="49"/>
    </location>
</feature>
<feature type="non-terminal residue">
    <location>
        <position position="1"/>
    </location>
</feature>
<evidence type="ECO:0000250" key="1"/>
<evidence type="ECO:0000256" key="2">
    <source>
        <dbReference type="SAM" id="MobiDB-lite"/>
    </source>
</evidence>
<evidence type="ECO:0000305" key="3"/>
<dbReference type="EMBL" id="AF047520">
    <property type="protein sequence ID" value="AAC03790.1"/>
    <property type="molecule type" value="mRNA"/>
</dbReference>
<dbReference type="FunCoup" id="O46617">
    <property type="interactions" value="38"/>
</dbReference>
<dbReference type="STRING" id="9796.ENSECAP00000011760"/>
<dbReference type="PaxDb" id="9796-ENSECAP00000011760"/>
<dbReference type="InParanoid" id="O46617"/>
<dbReference type="Proteomes" id="UP000002281">
    <property type="component" value="Unplaced"/>
</dbReference>
<dbReference type="GO" id="GO:0005576">
    <property type="term" value="C:extracellular region"/>
    <property type="evidence" value="ECO:0007669"/>
    <property type="project" value="UniProtKB-SubCell"/>
</dbReference>
<dbReference type="GO" id="GO:0005179">
    <property type="term" value="F:hormone activity"/>
    <property type="evidence" value="ECO:0007669"/>
    <property type="project" value="UniProtKB-KW"/>
</dbReference>
<dbReference type="GO" id="GO:0031788">
    <property type="term" value="F:motilin receptor binding"/>
    <property type="evidence" value="ECO:0000318"/>
    <property type="project" value="GO_Central"/>
</dbReference>
<dbReference type="InterPro" id="IPR006737">
    <property type="entry name" value="Motilin_assoc"/>
</dbReference>
<dbReference type="InterPro" id="IPR006738">
    <property type="entry name" value="Motilin_ghrelin"/>
</dbReference>
<dbReference type="InterPro" id="IPR015662">
    <property type="entry name" value="Promotilin"/>
</dbReference>
<dbReference type="PANTHER" id="PTHR14156">
    <property type="entry name" value="MOTILIN"/>
    <property type="match status" value="1"/>
</dbReference>
<dbReference type="PANTHER" id="PTHR14156:SF0">
    <property type="entry name" value="PROMOTILIN"/>
    <property type="match status" value="1"/>
</dbReference>
<dbReference type="Pfam" id="PF04643">
    <property type="entry name" value="Motilin_assoc"/>
    <property type="match status" value="1"/>
</dbReference>
<dbReference type="Pfam" id="PF04644">
    <property type="entry name" value="Motilin_ghrelin"/>
    <property type="match status" value="1"/>
</dbReference>
<accession>O46617</accession>
<gene>
    <name type="primary">MLN</name>
</gene>
<comment type="function">
    <text evidence="1">Plays an important role in the regulation of interdigestive gastrointestinal motility and indirectly causes rhythmic contraction of duodenal and colonic smooth muscle.</text>
</comment>
<comment type="subcellular location">
    <subcellularLocation>
        <location>Secreted</location>
    </subcellularLocation>
</comment>
<comment type="similarity">
    <text evidence="3">Belongs to the motilin family.</text>
</comment>